<gene>
    <name type="primary">Plod1</name>
    <name type="synonym">Plod</name>
</gene>
<name>PLOD1_MOUSE</name>
<comment type="function">
    <text evidence="2 7">Part of a complex composed of PLOD1, P3H3 and P3H4 that catalyzes hydroxylation of lysine residues in collagen alpha chains and is required for normal assembly and cross-linkling of collagen fibrils (PubMed:27119146). Forms hydroxylysine residues in -Xaa-Lys-Gly- sequences in collagens (By similarity). These hydroxylysines serve as sites of attachment for carbohydrate units and are essential for the stability of the intermolecular collagen cross-links (PubMed:27119146).</text>
</comment>
<comment type="catalytic activity">
    <reaction evidence="2">
        <text>L-lysyl-[collagen] + 2-oxoglutarate + O2 = (5R)-5-hydroxy-L-lysyl-[collagen] + succinate + CO2</text>
        <dbReference type="Rhea" id="RHEA:16569"/>
        <dbReference type="Rhea" id="RHEA-COMP:12751"/>
        <dbReference type="Rhea" id="RHEA-COMP:12752"/>
        <dbReference type="ChEBI" id="CHEBI:15379"/>
        <dbReference type="ChEBI" id="CHEBI:16526"/>
        <dbReference type="ChEBI" id="CHEBI:16810"/>
        <dbReference type="ChEBI" id="CHEBI:29969"/>
        <dbReference type="ChEBI" id="CHEBI:30031"/>
        <dbReference type="ChEBI" id="CHEBI:133442"/>
        <dbReference type="EC" id="1.14.11.4"/>
    </reaction>
</comment>
<comment type="cofactor">
    <cofactor evidence="2">
        <name>Fe(2+)</name>
        <dbReference type="ChEBI" id="CHEBI:29033"/>
    </cofactor>
</comment>
<comment type="cofactor">
    <cofactor evidence="2">
        <name>L-ascorbate</name>
        <dbReference type="ChEBI" id="CHEBI:38290"/>
    </cofactor>
</comment>
<comment type="subunit">
    <text evidence="2 7">Homodimer (By similarity). Identified in a complex with P3H3 and P3H4 (PubMed:27119146).</text>
</comment>
<comment type="subcellular location">
    <subcellularLocation>
        <location>Rough endoplasmic reticulum membrane</location>
        <topology>Peripheral membrane protein</topology>
        <orientation>Lumenal side</orientation>
    </subcellularLocation>
</comment>
<comment type="tissue specificity">
    <text evidence="5">Highly expressed in the liver, heart, lung, skeletal muscle and kidney.</text>
</comment>
<feature type="signal peptide" evidence="1">
    <location>
        <begin position="1"/>
        <end position="18"/>
    </location>
</feature>
<feature type="chain" id="PRO_0000024679" description="Procollagen-lysine,2-oxoglutarate 5-dioxygenase 1">
    <location>
        <begin position="19"/>
        <end position="728"/>
    </location>
</feature>
<feature type="domain" description="Fe2OG dioxygenase" evidence="4">
    <location>
        <begin position="637"/>
        <end position="728"/>
    </location>
</feature>
<feature type="active site" evidence="3">
    <location>
        <position position="719"/>
    </location>
</feature>
<feature type="binding site" evidence="4">
    <location>
        <position position="657"/>
    </location>
    <ligand>
        <name>Fe cation</name>
        <dbReference type="ChEBI" id="CHEBI:24875"/>
    </ligand>
</feature>
<feature type="binding site" evidence="4">
    <location>
        <position position="659"/>
    </location>
    <ligand>
        <name>Fe cation</name>
        <dbReference type="ChEBI" id="CHEBI:24875"/>
    </ligand>
</feature>
<feature type="binding site" evidence="4">
    <location>
        <position position="709"/>
    </location>
    <ligand>
        <name>Fe cation</name>
        <dbReference type="ChEBI" id="CHEBI:24875"/>
    </ligand>
</feature>
<feature type="glycosylation site" description="N-linked (GlcNAc...) asparagine" evidence="6">
    <location>
        <position position="198"/>
    </location>
</feature>
<feature type="glycosylation site" description="N-linked (GlcNAc...) asparagine" evidence="3">
    <location>
        <position position="539"/>
    </location>
</feature>
<feature type="glycosylation site" description="N-linked (GlcNAc...) asparagine" evidence="3">
    <location>
        <position position="687"/>
    </location>
</feature>
<protein>
    <recommendedName>
        <fullName>Procollagen-lysine,2-oxoglutarate 5-dioxygenase 1</fullName>
        <ecNumber evidence="2">1.14.11.4</ecNumber>
    </recommendedName>
    <alternativeName>
        <fullName>Lysyl hydroxylase 1</fullName>
        <shortName>LH1</shortName>
    </alternativeName>
</protein>
<evidence type="ECO:0000250" key="1"/>
<evidence type="ECO:0000250" key="2">
    <source>
        <dbReference type="UniProtKB" id="P24802"/>
    </source>
</evidence>
<evidence type="ECO:0000255" key="3"/>
<evidence type="ECO:0000255" key="4">
    <source>
        <dbReference type="PROSITE-ProRule" id="PRU00805"/>
    </source>
</evidence>
<evidence type="ECO:0000269" key="5">
    <source>
    </source>
</evidence>
<evidence type="ECO:0000269" key="6">
    <source>
    </source>
</evidence>
<evidence type="ECO:0000269" key="7">
    <source>
    </source>
</evidence>
<dbReference type="EC" id="1.14.11.4" evidence="2"/>
<dbReference type="EMBL" id="AF046782">
    <property type="protein sequence ID" value="AAD54617.1"/>
    <property type="molecule type" value="mRNA"/>
</dbReference>
<dbReference type="EMBL" id="BC006599">
    <property type="protein sequence ID" value="AAH06599.1"/>
    <property type="molecule type" value="mRNA"/>
</dbReference>
<dbReference type="CCDS" id="CCDS18924.1"/>
<dbReference type="RefSeq" id="NP_035252.1">
    <property type="nucleotide sequence ID" value="NM_011122.3"/>
</dbReference>
<dbReference type="SMR" id="Q9R0E2"/>
<dbReference type="BioGRID" id="202253">
    <property type="interactions" value="7"/>
</dbReference>
<dbReference type="CORUM" id="Q9R0E2"/>
<dbReference type="FunCoup" id="Q9R0E2">
    <property type="interactions" value="275"/>
</dbReference>
<dbReference type="STRING" id="10090.ENSMUSP00000019199"/>
<dbReference type="GlyConnect" id="2607">
    <property type="glycosylation" value="4 N-Linked glycans (2 sites)"/>
</dbReference>
<dbReference type="GlyCosmos" id="Q9R0E2">
    <property type="glycosylation" value="3 sites, 4 glycans"/>
</dbReference>
<dbReference type="GlyGen" id="Q9R0E2">
    <property type="glycosylation" value="3 sites, 5 N-linked glycans (2 sites)"/>
</dbReference>
<dbReference type="iPTMnet" id="Q9R0E2"/>
<dbReference type="PhosphoSitePlus" id="Q9R0E2"/>
<dbReference type="jPOST" id="Q9R0E2"/>
<dbReference type="PaxDb" id="10090-ENSMUSP00000019199"/>
<dbReference type="PeptideAtlas" id="Q9R0E2"/>
<dbReference type="ProteomicsDB" id="289448"/>
<dbReference type="Pumba" id="Q9R0E2"/>
<dbReference type="Antibodypedia" id="28331">
    <property type="antibodies" value="146 antibodies from 26 providers"/>
</dbReference>
<dbReference type="DNASU" id="18822"/>
<dbReference type="Ensembl" id="ENSMUST00000019199.14">
    <property type="protein sequence ID" value="ENSMUSP00000019199.8"/>
    <property type="gene ID" value="ENSMUSG00000019055.16"/>
</dbReference>
<dbReference type="GeneID" id="18822"/>
<dbReference type="KEGG" id="mmu:18822"/>
<dbReference type="UCSC" id="uc008vtk.2">
    <property type="organism name" value="mouse"/>
</dbReference>
<dbReference type="AGR" id="MGI:99907"/>
<dbReference type="CTD" id="5351"/>
<dbReference type="MGI" id="MGI:99907">
    <property type="gene designation" value="Plod1"/>
</dbReference>
<dbReference type="VEuPathDB" id="HostDB:ENSMUSG00000019055"/>
<dbReference type="eggNOG" id="KOG1971">
    <property type="taxonomic scope" value="Eukaryota"/>
</dbReference>
<dbReference type="GeneTree" id="ENSGT01030000234558"/>
<dbReference type="HOGENOM" id="CLU_022320_1_0_1"/>
<dbReference type="InParanoid" id="Q9R0E2"/>
<dbReference type="OMA" id="TDVACNH"/>
<dbReference type="OrthoDB" id="69177at2759"/>
<dbReference type="PhylomeDB" id="Q9R0E2"/>
<dbReference type="TreeFam" id="TF313826"/>
<dbReference type="BRENDA" id="1.14.11.4">
    <property type="organism ID" value="3474"/>
</dbReference>
<dbReference type="Reactome" id="R-MMU-1650814">
    <property type="pathway name" value="Collagen biosynthesis and modifying enzymes"/>
</dbReference>
<dbReference type="BioGRID-ORCS" id="18822">
    <property type="hits" value="0 hits in 80 CRISPR screens"/>
</dbReference>
<dbReference type="ChiTaRS" id="Plod1">
    <property type="organism name" value="mouse"/>
</dbReference>
<dbReference type="PRO" id="PR:Q9R0E2"/>
<dbReference type="Proteomes" id="UP000000589">
    <property type="component" value="Chromosome 4"/>
</dbReference>
<dbReference type="RNAct" id="Q9R0E2">
    <property type="molecule type" value="protein"/>
</dbReference>
<dbReference type="Bgee" id="ENSMUSG00000019055">
    <property type="expression patterns" value="Expressed in stroma of bone marrow and 241 other cell types or tissues"/>
</dbReference>
<dbReference type="ExpressionAtlas" id="Q9R0E2">
    <property type="expression patterns" value="baseline and differential"/>
</dbReference>
<dbReference type="GO" id="GO:1902494">
    <property type="term" value="C:catalytic complex"/>
    <property type="evidence" value="ECO:0000315"/>
    <property type="project" value="UniProtKB"/>
</dbReference>
<dbReference type="GO" id="GO:0062023">
    <property type="term" value="C:collagen-containing extracellular matrix"/>
    <property type="evidence" value="ECO:0007005"/>
    <property type="project" value="BHF-UCL"/>
</dbReference>
<dbReference type="GO" id="GO:0030867">
    <property type="term" value="C:rough endoplasmic reticulum membrane"/>
    <property type="evidence" value="ECO:0007669"/>
    <property type="project" value="UniProtKB-SubCell"/>
</dbReference>
<dbReference type="GO" id="GO:0005506">
    <property type="term" value="F:iron ion binding"/>
    <property type="evidence" value="ECO:0007669"/>
    <property type="project" value="InterPro"/>
</dbReference>
<dbReference type="GO" id="GO:0031418">
    <property type="term" value="F:L-ascorbic acid binding"/>
    <property type="evidence" value="ECO:0007669"/>
    <property type="project" value="UniProtKB-KW"/>
</dbReference>
<dbReference type="GO" id="GO:0008475">
    <property type="term" value="F:procollagen-lysine 5-dioxygenase activity"/>
    <property type="evidence" value="ECO:0000250"/>
    <property type="project" value="UniProtKB"/>
</dbReference>
<dbReference type="GO" id="GO:0008544">
    <property type="term" value="P:epidermis development"/>
    <property type="evidence" value="ECO:0007669"/>
    <property type="project" value="Ensembl"/>
</dbReference>
<dbReference type="GO" id="GO:0017185">
    <property type="term" value="P:peptidyl-lysine hydroxylation"/>
    <property type="evidence" value="ECO:0000250"/>
    <property type="project" value="UniProtKB"/>
</dbReference>
<dbReference type="GO" id="GO:0001666">
    <property type="term" value="P:response to hypoxia"/>
    <property type="evidence" value="ECO:0007669"/>
    <property type="project" value="Ensembl"/>
</dbReference>
<dbReference type="CDD" id="cd23004">
    <property type="entry name" value="GT_LH1"/>
    <property type="match status" value="1"/>
</dbReference>
<dbReference type="FunFam" id="2.60.120.620:FF:000004">
    <property type="entry name" value="Procollagen-lysine,2-oxoglutarate 5-dioxygenase 2"/>
    <property type="match status" value="1"/>
</dbReference>
<dbReference type="Gene3D" id="2.60.120.620">
    <property type="entry name" value="q2cbj1_9rhob like domain"/>
    <property type="match status" value="1"/>
</dbReference>
<dbReference type="InterPro" id="IPR050757">
    <property type="entry name" value="Collagen_mod_GT25"/>
</dbReference>
<dbReference type="InterPro" id="IPR044861">
    <property type="entry name" value="IPNS-like_FE2OG_OXY"/>
</dbReference>
<dbReference type="InterPro" id="IPR029044">
    <property type="entry name" value="Nucleotide-diphossugar_trans"/>
</dbReference>
<dbReference type="InterPro" id="IPR005123">
    <property type="entry name" value="Oxoglu/Fe-dep_dioxygenase_dom"/>
</dbReference>
<dbReference type="InterPro" id="IPR006620">
    <property type="entry name" value="Pro_4_hyd_alph"/>
</dbReference>
<dbReference type="InterPro" id="IPR001006">
    <property type="entry name" value="Procol_lys_dOase"/>
</dbReference>
<dbReference type="PANTHER" id="PTHR10730:SF5">
    <property type="entry name" value="PROCOLLAGEN-LYSINE,2-OXOGLUTARATE 5-DIOXYGENASE 1"/>
    <property type="match status" value="1"/>
</dbReference>
<dbReference type="PANTHER" id="PTHR10730">
    <property type="entry name" value="PROCOLLAGEN-LYSINE,2-OXOGLUTARATE 5-DIOXYGENASE/GLYCOSYLTRANSFERASE 25 FAMILY MEMBER"/>
    <property type="match status" value="1"/>
</dbReference>
<dbReference type="Pfam" id="PF03171">
    <property type="entry name" value="2OG-FeII_Oxy"/>
    <property type="match status" value="1"/>
</dbReference>
<dbReference type="Pfam" id="PF25342">
    <property type="entry name" value="GT_PLOD"/>
    <property type="match status" value="1"/>
</dbReference>
<dbReference type="Pfam" id="PF25238">
    <property type="entry name" value="OGFOD2-like"/>
    <property type="match status" value="1"/>
</dbReference>
<dbReference type="SMART" id="SM00702">
    <property type="entry name" value="P4Hc"/>
    <property type="match status" value="1"/>
</dbReference>
<dbReference type="SUPFAM" id="SSF53448">
    <property type="entry name" value="Nucleotide-diphospho-sugar transferases"/>
    <property type="match status" value="1"/>
</dbReference>
<dbReference type="PROSITE" id="PS51471">
    <property type="entry name" value="FE2OG_OXY"/>
    <property type="match status" value="1"/>
</dbReference>
<dbReference type="PROSITE" id="PS01325">
    <property type="entry name" value="LYS_HYDROXYLASE"/>
    <property type="match status" value="1"/>
</dbReference>
<proteinExistence type="evidence at protein level"/>
<sequence length="728" mass="83595">MRSLLLLAPLAWLLLVQAKDDAKLEDNLLVLTVATKETEGFRRFKRSAQFFNYKIQSLGLGEDWSVDGGPAAAGGGQKVRLLKKALEKHADKEDLVILFVDSYDVVFASGPRELLKKFQQAKSQVVFSAEEHIYPDRRLEAKYPTVPDGKRFLGSGGFIGYAPSLSKLVAEWEGQDSDSDQLFYTKIFLNPEKREQINISLDHRCRIFQNLDGALDEVVLKFEMGHVRARNLAYDTLPVVVHGNGPTKLQLNYLGNYIPRFWTFETGCTVCDEGLRSLKGIGDEALPTVLVGVFIEQPTPFLSLFFLRLLRLRYPQKQMRLFIHNQERHHKLQVEQFLAEHGSEYQSVKLVGPEVRMANADARNMGADLCRQDQTCTYYFSVDADVALTEPNSLRLLIEQNKNVIAPLMTRHGRLWSNFWGGLSADGYYARSEDYVDIVQGRRVGVWNVPYISNIYLIKGSALRAELQNVDLFHYSKLDSDMSFCANVRQQEVFMFLTNRHTFGHLLSLDNYQTTHLHNDLWEVFSNPEDWKEKYIHENYTKALAGKLVETPCPDVYWFPIFTEAACDELVEEMEHYGQWSLGDNKDNRIQGGYENVPTIDIHMNQITFEREWHKFLVEYIAPMTEKLYPGYYTRAQFDLAFVVRYKPDEQPSLMPHHDASTFTVNIALNRVGEDYEGGGCRFLRYNCSVRAPRKGWALLHPGRLTHYHEGLPTTKGTRYIAVSFVDP</sequence>
<keyword id="KW-0223">Dioxygenase</keyword>
<keyword id="KW-0256">Endoplasmic reticulum</keyword>
<keyword id="KW-0325">Glycoprotein</keyword>
<keyword id="KW-0408">Iron</keyword>
<keyword id="KW-0472">Membrane</keyword>
<keyword id="KW-0479">Metal-binding</keyword>
<keyword id="KW-0560">Oxidoreductase</keyword>
<keyword id="KW-1185">Reference proteome</keyword>
<keyword id="KW-0732">Signal</keyword>
<keyword id="KW-0847">Vitamin C</keyword>
<reference key="1">
    <citation type="journal article" date="1999" name="Matrix Biol.">
        <title>Characterization of cDNAs for mouse lysyl hydroxylase 1, 2 and 3, their phylogenetic analysis and tissue-specific expression in the mouse.</title>
        <authorList>
            <person name="Ruotsalainen H."/>
            <person name="Sipila L."/>
            <person name="Kerkela E."/>
            <person name="Pospiech H."/>
            <person name="Myllylae R."/>
        </authorList>
    </citation>
    <scope>NUCLEOTIDE SEQUENCE [MRNA]</scope>
    <scope>TISSUE SPECIFICITY</scope>
</reference>
<reference key="2">
    <citation type="journal article" date="2004" name="Genome Res.">
        <title>The status, quality, and expansion of the NIH full-length cDNA project: the Mammalian Gene Collection (MGC).</title>
        <authorList>
            <consortium name="The MGC Project Team"/>
        </authorList>
    </citation>
    <scope>NUCLEOTIDE SEQUENCE [LARGE SCALE MRNA]</scope>
</reference>
<reference key="3">
    <citation type="journal article" date="2009" name="Nat. Biotechnol.">
        <title>Mass-spectrometric identification and relative quantification of N-linked cell surface glycoproteins.</title>
        <authorList>
            <person name="Wollscheid B."/>
            <person name="Bausch-Fluck D."/>
            <person name="Henderson C."/>
            <person name="O'Brien R."/>
            <person name="Bibel M."/>
            <person name="Schiess R."/>
            <person name="Aebersold R."/>
            <person name="Watts J.D."/>
        </authorList>
    </citation>
    <scope>GLYCOSYLATION [LARGE SCALE ANALYSIS] AT ASN-198</scope>
</reference>
<reference key="4">
    <citation type="journal article" date="2010" name="Cell">
        <title>A tissue-specific atlas of mouse protein phosphorylation and expression.</title>
        <authorList>
            <person name="Huttlin E.L."/>
            <person name="Jedrychowski M.P."/>
            <person name="Elias J.E."/>
            <person name="Goswami T."/>
            <person name="Rad R."/>
            <person name="Beausoleil S.A."/>
            <person name="Villen J."/>
            <person name="Haas W."/>
            <person name="Sowa M.E."/>
            <person name="Gygi S.P."/>
        </authorList>
    </citation>
    <scope>IDENTIFICATION BY MASS SPECTROMETRY [LARGE SCALE ANALYSIS]</scope>
    <source>
        <tissue>Brown adipose tissue</tissue>
        <tissue>Heart</tissue>
        <tissue>Kidney</tissue>
        <tissue>Liver</tissue>
        <tissue>Lung</tissue>
    </source>
</reference>
<reference key="5">
    <citation type="journal article" date="2016" name="PLoS Genet.">
        <title>Sc65-Null Mice Provide Evidence for a Novel Endoplasmic Reticulum Complex Regulating Collagen Lysyl Hydroxylation.</title>
        <authorList>
            <person name="Heard M.E."/>
            <person name="Besio R."/>
            <person name="Weis M."/>
            <person name="Rai J."/>
            <person name="Hudson D.M."/>
            <person name="Dimori M."/>
            <person name="Zimmerman S.M."/>
            <person name="Kamykowski J.A."/>
            <person name="Hogue W.R."/>
            <person name="Swain F.L."/>
            <person name="Burdine M.S."/>
            <person name="Mackintosh S.G."/>
            <person name="Tackett A.J."/>
            <person name="Suva L.J."/>
            <person name="Eyre D.R."/>
            <person name="Morello R."/>
        </authorList>
    </citation>
    <scope>FUNCTION</scope>
    <scope>IDENTIFICATION IN A COMPLEX WITH P3H3 AND P3H4</scope>
</reference>
<accession>Q9R0E2</accession>
<organism>
    <name type="scientific">Mus musculus</name>
    <name type="common">Mouse</name>
    <dbReference type="NCBI Taxonomy" id="10090"/>
    <lineage>
        <taxon>Eukaryota</taxon>
        <taxon>Metazoa</taxon>
        <taxon>Chordata</taxon>
        <taxon>Craniata</taxon>
        <taxon>Vertebrata</taxon>
        <taxon>Euteleostomi</taxon>
        <taxon>Mammalia</taxon>
        <taxon>Eutheria</taxon>
        <taxon>Euarchontoglires</taxon>
        <taxon>Glires</taxon>
        <taxon>Rodentia</taxon>
        <taxon>Myomorpha</taxon>
        <taxon>Muroidea</taxon>
        <taxon>Muridae</taxon>
        <taxon>Murinae</taxon>
        <taxon>Mus</taxon>
        <taxon>Mus</taxon>
    </lineage>
</organism>